<keyword id="KW-0046">Antibiotic resistance</keyword>
<keyword id="KW-0963">Cytoplasm</keyword>
<keyword id="KW-0206">Cytoskeleton</keyword>
<keyword id="KW-0342">GTP-binding</keyword>
<keyword id="KW-0460">Magnesium</keyword>
<keyword id="KW-0479">Metal-binding</keyword>
<keyword id="KW-0493">Microtubule</keyword>
<keyword id="KW-0547">Nucleotide-binding</keyword>
<sequence length="447" mass="49847">MREIVHLQTGQCGNQIGAAFWQNISGEHGLDSNGVYNGTSELQLERMSVYFNEASGNKYVPRAVLVDLEPGTMDAVRAGPFGQLFRPDNFVFGQSGAGNNWAKGHYTEGAELVDQVLDVVRREAEGCDCLQGFQITHSLGGGTGAGMGTLLISKIREEFPDRMMATFSVVPSPKVSDTVVEPYNATLSVHQLVENSDETFCIDNEALYDICMRTLKLSNPSYGDLNHLVSAVMSGVTTCLRFPGQLNSDLRKLAVNMVPFPRLHFFMVGFAPLTSRGAHSFRAVSVPELTQQMFDPKNMMAASDFRNGRYLTCSAIFRGKVAMKDVEDQMRNVQNKNSSYFVEWIPNNVQTALCSIPPRGLKMSSTFVGNATAIQELFKRVGEQFTAMFRRKAFLHWYTGEGMDEMEFTEAESNMNDLVSEYQQYQDAGVDEEEEEYEEEAPLEEEV</sequence>
<feature type="chain" id="PRO_0000048402" description="Tubulin beta-2 chain">
    <location>
        <begin position="1"/>
        <end position="447"/>
    </location>
</feature>
<feature type="region of interest" description="Disordered" evidence="3">
    <location>
        <begin position="426"/>
        <end position="447"/>
    </location>
</feature>
<feature type="compositionally biased region" description="Acidic residues" evidence="3">
    <location>
        <begin position="429"/>
        <end position="447"/>
    </location>
</feature>
<feature type="binding site" evidence="2">
    <location>
        <position position="11"/>
    </location>
    <ligand>
        <name>GTP</name>
        <dbReference type="ChEBI" id="CHEBI:37565"/>
    </ligand>
</feature>
<feature type="binding site" evidence="1">
    <location>
        <position position="69"/>
    </location>
    <ligand>
        <name>GTP</name>
        <dbReference type="ChEBI" id="CHEBI:37565"/>
    </ligand>
</feature>
<feature type="binding site" evidence="1">
    <location>
        <position position="69"/>
    </location>
    <ligand>
        <name>Mg(2+)</name>
        <dbReference type="ChEBI" id="CHEBI:18420"/>
    </ligand>
</feature>
<feature type="binding site" evidence="2">
    <location>
        <position position="138"/>
    </location>
    <ligand>
        <name>GTP</name>
        <dbReference type="ChEBI" id="CHEBI:37565"/>
    </ligand>
</feature>
<feature type="binding site" evidence="2">
    <location>
        <position position="142"/>
    </location>
    <ligand>
        <name>GTP</name>
        <dbReference type="ChEBI" id="CHEBI:37565"/>
    </ligand>
</feature>
<feature type="binding site" evidence="2">
    <location>
        <position position="143"/>
    </location>
    <ligand>
        <name>GTP</name>
        <dbReference type="ChEBI" id="CHEBI:37565"/>
    </ligand>
</feature>
<feature type="binding site" evidence="2">
    <location>
        <position position="144"/>
    </location>
    <ligand>
        <name>GTP</name>
        <dbReference type="ChEBI" id="CHEBI:37565"/>
    </ligand>
</feature>
<feature type="binding site" evidence="2">
    <location>
        <position position="204"/>
    </location>
    <ligand>
        <name>GTP</name>
        <dbReference type="ChEBI" id="CHEBI:37565"/>
    </ligand>
</feature>
<feature type="binding site" evidence="2">
    <location>
        <position position="226"/>
    </location>
    <ligand>
        <name>GTP</name>
        <dbReference type="ChEBI" id="CHEBI:37565"/>
    </ligand>
</feature>
<feature type="sequence variant" description="In benomyl-resistant strain." evidence="4">
    <original>E</original>
    <variation>K</variation>
    <location>
        <position position="198"/>
    </location>
</feature>
<gene>
    <name type="primary">TUB2</name>
</gene>
<organism>
    <name type="scientific">Colletotrichum gloeosporioides</name>
    <name type="common">Anthracnose fungus</name>
    <name type="synonym">Glomerella cingulata</name>
    <dbReference type="NCBI Taxonomy" id="474922"/>
    <lineage>
        <taxon>Eukaryota</taxon>
        <taxon>Fungi</taxon>
        <taxon>Dikarya</taxon>
        <taxon>Ascomycota</taxon>
        <taxon>Pezizomycotina</taxon>
        <taxon>Sordariomycetes</taxon>
        <taxon>Hypocreomycetidae</taxon>
        <taxon>Glomerellales</taxon>
        <taxon>Glomerellaceae</taxon>
        <taxon>Colletotrichum</taxon>
        <taxon>Colletotrichum gloeosporioides species complex</taxon>
    </lineage>
</organism>
<comment type="function">
    <text>Tubulin is the major constituent of microtubules, a cylinder consisting of laterally associated linear protofilaments composed of alpha- and beta-tubulin heterodimers. Microtubules grow by the addition of GTP-tubulin dimers to the microtubule end, where a stabilizing cap forms. Below the cap, tubulin dimers are in GDP-bound state, owing to GTPase activity of alpha-tubulin.</text>
</comment>
<comment type="cofactor">
    <cofactor evidence="1">
        <name>Mg(2+)</name>
        <dbReference type="ChEBI" id="CHEBI:18420"/>
    </cofactor>
</comment>
<comment type="subunit">
    <text>Dimer of alpha and beta chains. A typical microtubule is a hollow water-filled tube with an outer diameter of 25 nm and an inner diameter of 15 nM. Alpha-beta heterodimers associate head-to-tail to form protofilaments running lengthwise along the microtubule wall with the beta-tubulin subunit facing the microtubule plus end conferring a structural polarity. Microtubules usually have 13 protofilaments but different protofilament numbers can be found in some organisms and specialized cells.</text>
</comment>
<comment type="subcellular location">
    <subcellularLocation>
        <location>Cytoplasm</location>
        <location>Cytoskeleton</location>
    </subcellularLocation>
</comment>
<comment type="similarity">
    <text evidence="5">Belongs to the tubulin family.</text>
</comment>
<proteinExistence type="inferred from homology"/>
<reference key="1">
    <citation type="journal article" date="1994" name="Appl. Environ. Microbiol.">
        <title>Isolation, characterization, and expression of a second beta-tubulin-encoding gene from Colletotrichum gloeosporioides f. sp. aeschynomene.</title>
        <authorList>
            <person name="Buhr T.L."/>
            <person name="Dickman M.B."/>
        </authorList>
    </citation>
    <scope>NUCLEOTIDE SEQUENCE [GENOMIC DNA]</scope>
    <scope>VARIANT LYS-198</scope>
    <source>
        <strain>Sp. aeschynomene / Isolate 3.1.3</strain>
    </source>
</reference>
<reference key="2">
    <citation type="submission" date="1999-10" db="EMBL/GenBank/DDBJ databases">
        <authorList>
            <person name="Buhr T.L."/>
        </authorList>
    </citation>
    <scope>SEQUENCE REVISION TO 21-35</scope>
</reference>
<dbReference type="EMBL" id="U14138">
    <property type="protein sequence ID" value="AAA62875.2"/>
    <property type="molecule type" value="Genomic_DNA"/>
</dbReference>
<dbReference type="SMR" id="P40904"/>
<dbReference type="GO" id="GO:0005737">
    <property type="term" value="C:cytoplasm"/>
    <property type="evidence" value="ECO:0007669"/>
    <property type="project" value="UniProtKB-KW"/>
</dbReference>
<dbReference type="GO" id="GO:0005874">
    <property type="term" value="C:microtubule"/>
    <property type="evidence" value="ECO:0007669"/>
    <property type="project" value="UniProtKB-KW"/>
</dbReference>
<dbReference type="GO" id="GO:0005525">
    <property type="term" value="F:GTP binding"/>
    <property type="evidence" value="ECO:0007669"/>
    <property type="project" value="UniProtKB-KW"/>
</dbReference>
<dbReference type="GO" id="GO:0003924">
    <property type="term" value="F:GTPase activity"/>
    <property type="evidence" value="ECO:0007669"/>
    <property type="project" value="InterPro"/>
</dbReference>
<dbReference type="GO" id="GO:0046872">
    <property type="term" value="F:metal ion binding"/>
    <property type="evidence" value="ECO:0007669"/>
    <property type="project" value="UniProtKB-KW"/>
</dbReference>
<dbReference type="GO" id="GO:0005200">
    <property type="term" value="F:structural constituent of cytoskeleton"/>
    <property type="evidence" value="ECO:0007669"/>
    <property type="project" value="InterPro"/>
</dbReference>
<dbReference type="GO" id="GO:0007017">
    <property type="term" value="P:microtubule-based process"/>
    <property type="evidence" value="ECO:0007669"/>
    <property type="project" value="InterPro"/>
</dbReference>
<dbReference type="GO" id="GO:0046677">
    <property type="term" value="P:response to antibiotic"/>
    <property type="evidence" value="ECO:0007669"/>
    <property type="project" value="UniProtKB-KW"/>
</dbReference>
<dbReference type="CDD" id="cd02187">
    <property type="entry name" value="beta_tubulin"/>
    <property type="match status" value="1"/>
</dbReference>
<dbReference type="FunFam" id="1.10.287.600:FF:000003">
    <property type="entry name" value="Tubulin beta chain"/>
    <property type="match status" value="1"/>
</dbReference>
<dbReference type="FunFam" id="3.30.1330.20:FF:000002">
    <property type="entry name" value="Tubulin beta chain"/>
    <property type="match status" value="1"/>
</dbReference>
<dbReference type="FunFam" id="3.40.50.1440:FF:000009">
    <property type="entry name" value="Tubulin beta chain"/>
    <property type="match status" value="1"/>
</dbReference>
<dbReference type="Gene3D" id="1.10.287.600">
    <property type="entry name" value="Helix hairpin bin"/>
    <property type="match status" value="1"/>
</dbReference>
<dbReference type="Gene3D" id="3.30.1330.20">
    <property type="entry name" value="Tubulin/FtsZ, C-terminal domain"/>
    <property type="match status" value="1"/>
</dbReference>
<dbReference type="Gene3D" id="3.40.50.1440">
    <property type="entry name" value="Tubulin/FtsZ, GTPase domain"/>
    <property type="match status" value="1"/>
</dbReference>
<dbReference type="InterPro" id="IPR013838">
    <property type="entry name" value="Beta-tubulin_BS"/>
</dbReference>
<dbReference type="InterPro" id="IPR002453">
    <property type="entry name" value="Beta_tubulin"/>
</dbReference>
<dbReference type="InterPro" id="IPR008280">
    <property type="entry name" value="Tub_FtsZ_C"/>
</dbReference>
<dbReference type="InterPro" id="IPR000217">
    <property type="entry name" value="Tubulin"/>
</dbReference>
<dbReference type="InterPro" id="IPR037103">
    <property type="entry name" value="Tubulin/FtsZ-like_C"/>
</dbReference>
<dbReference type="InterPro" id="IPR018316">
    <property type="entry name" value="Tubulin/FtsZ_2-layer-sand-dom"/>
</dbReference>
<dbReference type="InterPro" id="IPR036525">
    <property type="entry name" value="Tubulin/FtsZ_GTPase_sf"/>
</dbReference>
<dbReference type="InterPro" id="IPR023123">
    <property type="entry name" value="Tubulin_C"/>
</dbReference>
<dbReference type="InterPro" id="IPR017975">
    <property type="entry name" value="Tubulin_CS"/>
</dbReference>
<dbReference type="InterPro" id="IPR003008">
    <property type="entry name" value="Tubulin_FtsZ_GTPase"/>
</dbReference>
<dbReference type="PANTHER" id="PTHR11588">
    <property type="entry name" value="TUBULIN"/>
    <property type="match status" value="1"/>
</dbReference>
<dbReference type="Pfam" id="PF00091">
    <property type="entry name" value="Tubulin"/>
    <property type="match status" value="1"/>
</dbReference>
<dbReference type="Pfam" id="PF03953">
    <property type="entry name" value="Tubulin_C"/>
    <property type="match status" value="1"/>
</dbReference>
<dbReference type="PRINTS" id="PR01163">
    <property type="entry name" value="BETATUBULIN"/>
</dbReference>
<dbReference type="PRINTS" id="PR01161">
    <property type="entry name" value="TUBULIN"/>
</dbReference>
<dbReference type="SMART" id="SM00864">
    <property type="entry name" value="Tubulin"/>
    <property type="match status" value="1"/>
</dbReference>
<dbReference type="SMART" id="SM00865">
    <property type="entry name" value="Tubulin_C"/>
    <property type="match status" value="1"/>
</dbReference>
<dbReference type="SUPFAM" id="SSF55307">
    <property type="entry name" value="Tubulin C-terminal domain-like"/>
    <property type="match status" value="1"/>
</dbReference>
<dbReference type="SUPFAM" id="SSF52490">
    <property type="entry name" value="Tubulin nucleotide-binding domain-like"/>
    <property type="match status" value="1"/>
</dbReference>
<dbReference type="PROSITE" id="PS00227">
    <property type="entry name" value="TUBULIN"/>
    <property type="match status" value="1"/>
</dbReference>
<dbReference type="PROSITE" id="PS00228">
    <property type="entry name" value="TUBULIN_B_AUTOREG"/>
    <property type="match status" value="1"/>
</dbReference>
<name>TBB2_COLGL</name>
<protein>
    <recommendedName>
        <fullName>Tubulin beta-2 chain</fullName>
    </recommendedName>
    <alternativeName>
        <fullName>Beta-2-tubulin</fullName>
    </alternativeName>
</protein>
<evidence type="ECO:0000250" key="1">
    <source>
        <dbReference type="UniProtKB" id="P68363"/>
    </source>
</evidence>
<evidence type="ECO:0000250" key="2">
    <source>
        <dbReference type="UniProtKB" id="Q13509"/>
    </source>
</evidence>
<evidence type="ECO:0000256" key="3">
    <source>
        <dbReference type="SAM" id="MobiDB-lite"/>
    </source>
</evidence>
<evidence type="ECO:0000269" key="4">
    <source>
    </source>
</evidence>
<evidence type="ECO:0000305" key="5"/>
<accession>P40904</accession>